<evidence type="ECO:0000250" key="1"/>
<evidence type="ECO:0000250" key="2">
    <source>
        <dbReference type="UniProtKB" id="P96086"/>
    </source>
</evidence>
<evidence type="ECO:0000305" key="3"/>
<dbReference type="EC" id="3.4.21.-"/>
<dbReference type="EMBL" id="BA000023">
    <property type="protein sequence ID" value="BAB66203.1"/>
    <property type="molecule type" value="Genomic_DNA"/>
</dbReference>
<dbReference type="RefSeq" id="WP_010979182.1">
    <property type="nucleotide sequence ID" value="NC_003106.2"/>
</dbReference>
<dbReference type="SMR" id="Q972G5"/>
<dbReference type="STRING" id="273063.STK_11680"/>
<dbReference type="GeneID" id="1459157"/>
<dbReference type="KEGG" id="sto:STK_11680"/>
<dbReference type="PATRIC" id="fig|273063.9.peg.1319"/>
<dbReference type="eggNOG" id="arCOG03384">
    <property type="taxonomic scope" value="Archaea"/>
</dbReference>
<dbReference type="OrthoDB" id="25019at2157"/>
<dbReference type="Proteomes" id="UP000001015">
    <property type="component" value="Chromosome"/>
</dbReference>
<dbReference type="GO" id="GO:0005737">
    <property type="term" value="C:cytoplasm"/>
    <property type="evidence" value="ECO:0007669"/>
    <property type="project" value="UniProtKB-SubCell"/>
</dbReference>
<dbReference type="GO" id="GO:0008236">
    <property type="term" value="F:serine-type peptidase activity"/>
    <property type="evidence" value="ECO:0000250"/>
    <property type="project" value="UniProtKB"/>
</dbReference>
<dbReference type="GO" id="GO:0006508">
    <property type="term" value="P:proteolysis"/>
    <property type="evidence" value="ECO:0000250"/>
    <property type="project" value="UniProtKB"/>
</dbReference>
<dbReference type="CDD" id="cd10828">
    <property type="entry name" value="cpPDZ_Tricorn-protease"/>
    <property type="match status" value="1"/>
</dbReference>
<dbReference type="CDD" id="cd07562">
    <property type="entry name" value="Peptidase_S41_TRI"/>
    <property type="match status" value="1"/>
</dbReference>
<dbReference type="Gene3D" id="2.30.42.10">
    <property type="match status" value="1"/>
</dbReference>
<dbReference type="Gene3D" id="3.30.750.44">
    <property type="match status" value="1"/>
</dbReference>
<dbReference type="Gene3D" id="3.90.226.10">
    <property type="entry name" value="2-enoyl-CoA Hydratase, Chain A, domain 1"/>
    <property type="match status" value="1"/>
</dbReference>
<dbReference type="Gene3D" id="2.120.10.60">
    <property type="entry name" value="Tricorn protease N-terminal domain"/>
    <property type="match status" value="1"/>
</dbReference>
<dbReference type="Gene3D" id="2.130.10.10">
    <property type="entry name" value="YVTN repeat-like/Quinoprotein amine dehydrogenase"/>
    <property type="match status" value="1"/>
</dbReference>
<dbReference type="InterPro" id="IPR029045">
    <property type="entry name" value="ClpP/crotonase-like_dom_sf"/>
</dbReference>
<dbReference type="InterPro" id="IPR011659">
    <property type="entry name" value="PD40"/>
</dbReference>
<dbReference type="InterPro" id="IPR036034">
    <property type="entry name" value="PDZ_sf"/>
</dbReference>
<dbReference type="InterPro" id="IPR005151">
    <property type="entry name" value="Tail-specific_protease"/>
</dbReference>
<dbReference type="InterPro" id="IPR028204">
    <property type="entry name" value="Tricorn_C1"/>
</dbReference>
<dbReference type="InterPro" id="IPR029414">
    <property type="entry name" value="Tricorn_PDZ"/>
</dbReference>
<dbReference type="InterPro" id="IPR012393">
    <property type="entry name" value="Tricorn_protease"/>
</dbReference>
<dbReference type="InterPro" id="IPR015943">
    <property type="entry name" value="WD40/YVTN_repeat-like_dom_sf"/>
</dbReference>
<dbReference type="PANTHER" id="PTHR43253">
    <property type="entry name" value="TRICORN PROTEASE HOMOLOG 2-RELATED"/>
    <property type="match status" value="1"/>
</dbReference>
<dbReference type="PANTHER" id="PTHR43253:SF1">
    <property type="entry name" value="TRICORN PROTEASE HOMOLOG 2-RELATED"/>
    <property type="match status" value="1"/>
</dbReference>
<dbReference type="Pfam" id="PF07676">
    <property type="entry name" value="PD40"/>
    <property type="match status" value="1"/>
</dbReference>
<dbReference type="Pfam" id="PF14685">
    <property type="entry name" value="PDZ_Tricorn"/>
    <property type="match status" value="1"/>
</dbReference>
<dbReference type="Pfam" id="PF03572">
    <property type="entry name" value="Peptidase_S41"/>
    <property type="match status" value="1"/>
</dbReference>
<dbReference type="Pfam" id="PF14684">
    <property type="entry name" value="Tricorn_C1"/>
    <property type="match status" value="1"/>
</dbReference>
<dbReference type="SMART" id="SM00245">
    <property type="entry name" value="TSPc"/>
    <property type="match status" value="1"/>
</dbReference>
<dbReference type="SUPFAM" id="SSF52096">
    <property type="entry name" value="ClpP/crotonase"/>
    <property type="match status" value="1"/>
</dbReference>
<dbReference type="SUPFAM" id="SSF82171">
    <property type="entry name" value="DPP6 N-terminal domain-like"/>
    <property type="match status" value="1"/>
</dbReference>
<dbReference type="SUPFAM" id="SSF50156">
    <property type="entry name" value="PDZ domain-like"/>
    <property type="match status" value="1"/>
</dbReference>
<feature type="chain" id="PRO_0000207196" description="Putative Tricorn-like protease C-terminal subunit">
    <location>
        <begin position="1"/>
        <end position="854"/>
    </location>
</feature>
<feature type="region of interest" description="PDZ-like">
    <location>
        <begin position="554"/>
        <end position="646"/>
    </location>
</feature>
<feature type="active site" description="Charge relay system" evidence="1">
    <location>
        <position position="539"/>
    </location>
</feature>
<feature type="active site" description="Nucleophile" evidence="2">
    <location>
        <position position="756"/>
    </location>
</feature>
<feature type="active site" description="Charge relay system" evidence="2">
    <location>
        <position position="814"/>
    </location>
</feature>
<feature type="binding site" evidence="2">
    <location>
        <position position="709"/>
    </location>
    <ligand>
        <name>substrate</name>
    </ligand>
</feature>
<feature type="site" description="Transition state stabilizer; via amide nitrogen" evidence="2">
    <location>
        <position position="757"/>
    </location>
</feature>
<protein>
    <recommendedName>
        <fullName>Putative Tricorn-like protease C-terminal subunit</fullName>
        <ecNumber>3.4.21.-</ecNumber>
    </recommendedName>
</protein>
<comment type="function">
    <text evidence="1">Degrades oligopeptides in a sequential manner.</text>
</comment>
<comment type="subcellular location">
    <subcellularLocation>
        <location evidence="1">Cytoplasm</location>
    </subcellularLocation>
</comment>
<comment type="similarity">
    <text evidence="3">Belongs to the peptidase S41B family.</text>
</comment>
<comment type="caution">
    <text evidence="3">Tricorn seems to be split into two ORFs in S.tokodaii, encoded on opposite strands and separated by approximately 279 kb.</text>
</comment>
<organism>
    <name type="scientific">Sulfurisphaera tokodaii (strain DSM 16993 / JCM 10545 / NBRC 100140 / 7)</name>
    <name type="common">Sulfolobus tokodaii</name>
    <dbReference type="NCBI Taxonomy" id="273063"/>
    <lineage>
        <taxon>Archaea</taxon>
        <taxon>Thermoproteota</taxon>
        <taxon>Thermoprotei</taxon>
        <taxon>Sulfolobales</taxon>
        <taxon>Sulfolobaceae</taxon>
        <taxon>Sulfurisphaera</taxon>
    </lineage>
</organism>
<gene>
    <name type="primary">triC</name>
    <name type="ordered locus">STK_11680</name>
</gene>
<proteinExistence type="inferred from homology"/>
<accession>Q972G5</accession>
<keyword id="KW-0963">Cytoplasm</keyword>
<keyword id="KW-0378">Hydrolase</keyword>
<keyword id="KW-0645">Protease</keyword>
<keyword id="KW-1185">Reference proteome</keyword>
<keyword id="KW-0720">Serine protease</keyword>
<name>TRIC_SULTO</name>
<sequence length="854" mass="98910">MFYNFLLYLVIHVNYALDALTFNKFLSLDGIVSWPMIIKDRVYFLSDHEGISNLYSVNLEGKDLTKHTNFTEYYCRNASSDGRRIVFQNSGDIYLYDPEKQELKLLDIDLPTDRKKKQGKFVEVLDYTTEAIANDKYLSLISRGKVFLMRHWDGPAVQLGEKQGVRYKQIQLLPNGDTVVLDTNDDKLTFLSKDGSIKKLNVDLGRIERIKVSPDGKKILISNNRLELWLYEVDTTNLRLIDKSEYDVISQMDWHPDNEWFAYTFPESYSTQSIKLAHISGKVIRITSPYGYDFSPSFDPDGRYLYFLSARHLDPTNDKVIFNMSFQRVIKPYLVVLSNTYSPFNQSLEETTSDKKVEIEGIEDRVIPFPVDEDYYIRIEGAKNNKVFLFSLPIKGYRYPGETLGKLEVFDLDSKTKELYADNVKSFSLTIDKGKILILFKDSIRLFDVNTKPDLNATGKKGGIVDLSRIKVYVDPEREWKQMFREAWKLMQQNYWKPDGLKDWESVLLKYEKLIDRISTRYELSDLIQEMQGETKTSHSYEMPYDYDTAEPLPIGGLGADYEYDKENKCYKIARIYVGDPTNENERSPLRDPGVQLNIGDCIKAVDGEEVKYNILSYLVNKDQVVLDVITKGKTKRVTVKLLKDEKFLIYRYWVEKNRQYVHEKSKGKLGYVHIPDMMYQGFAEFYRLFLSEFHREGLIVDVRFNRGGFISGLILEKLLLKRMGYVVRRNGKELPHPFFSSPGVIVAITNQYAGSDGDIFSYLFKKYKLGILIGRRTWGGVIGINVRDRLADNSAVSQPEFAVHFHDIGLKIENYGVDPDIEVDIKPEDYANGRDPQLDTAIELALKQLEEKS</sequence>
<reference key="1">
    <citation type="journal article" date="2001" name="DNA Res.">
        <title>Complete genome sequence of an aerobic thermoacidophilic Crenarchaeon, Sulfolobus tokodaii strain7.</title>
        <authorList>
            <person name="Kawarabayasi Y."/>
            <person name="Hino Y."/>
            <person name="Horikawa H."/>
            <person name="Jin-no K."/>
            <person name="Takahashi M."/>
            <person name="Sekine M."/>
            <person name="Baba S."/>
            <person name="Ankai A."/>
            <person name="Kosugi H."/>
            <person name="Hosoyama A."/>
            <person name="Fukui S."/>
            <person name="Nagai Y."/>
            <person name="Nishijima K."/>
            <person name="Otsuka R."/>
            <person name="Nakazawa H."/>
            <person name="Takamiya M."/>
            <person name="Kato Y."/>
            <person name="Yoshizawa T."/>
            <person name="Tanaka T."/>
            <person name="Kudoh Y."/>
            <person name="Yamazaki J."/>
            <person name="Kushida N."/>
            <person name="Oguchi A."/>
            <person name="Aoki K."/>
            <person name="Masuda S."/>
            <person name="Yanagii M."/>
            <person name="Nishimura M."/>
            <person name="Yamagishi A."/>
            <person name="Oshima T."/>
            <person name="Kikuchi H."/>
        </authorList>
    </citation>
    <scope>NUCLEOTIDE SEQUENCE [LARGE SCALE GENOMIC DNA]</scope>
    <source>
        <strain>DSM 16993 / JCM 10545 / NBRC 100140 / 7</strain>
    </source>
</reference>